<keyword id="KW-0034">Amyloid</keyword>
<keyword id="KW-0106">Calcium</keyword>
<keyword id="KW-0903">Direct protein sequencing</keyword>
<keyword id="KW-0430">Lectin</keyword>
<keyword id="KW-0479">Metal-binding</keyword>
<keyword id="KW-1185">Reference proteome</keyword>
<keyword id="KW-0964">Secreted</keyword>
<organism>
    <name type="scientific">Salmo salar</name>
    <name type="common">Atlantic salmon</name>
    <dbReference type="NCBI Taxonomy" id="8030"/>
    <lineage>
        <taxon>Eukaryota</taxon>
        <taxon>Metazoa</taxon>
        <taxon>Chordata</taxon>
        <taxon>Craniata</taxon>
        <taxon>Vertebrata</taxon>
        <taxon>Euteleostomi</taxon>
        <taxon>Actinopterygii</taxon>
        <taxon>Neopterygii</taxon>
        <taxon>Teleostei</taxon>
        <taxon>Protacanthopterygii</taxon>
        <taxon>Salmoniformes</taxon>
        <taxon>Salmonidae</taxon>
        <taxon>Salmoninae</taxon>
        <taxon>Salmo</taxon>
    </lineage>
</organism>
<feature type="chain" id="PRO_0000397214" description="Serum amyloid P-component">
    <location>
        <begin position="1"/>
        <end position="36" status="greater than"/>
    </location>
</feature>
<feature type="domain" description="Pentraxin (PTX)" evidence="3">
    <location>
        <begin position="6"/>
        <end position="36" status="greater than"/>
    </location>
</feature>
<feature type="non-terminal residue" evidence="5">
    <location>
        <position position="36"/>
    </location>
</feature>
<comment type="cofactor">
    <cofactor evidence="1 4">
        <name>Ca(2+)</name>
        <dbReference type="ChEBI" id="CHEBI:29108"/>
    </cofactor>
    <text evidence="1 4">Binds 2 calcium ions per subunit.</text>
</comment>
<comment type="subunit">
    <text evidence="1 4">Homopentamer. Discoid arrangement of 5 covalently bound subunits.</text>
</comment>
<comment type="subcellular location">
    <subcellularLocation>
        <location evidence="4">Secreted</location>
    </subcellularLocation>
</comment>
<comment type="similarity">
    <text evidence="2">Belongs to the pentraxin family.</text>
</comment>
<name>SAMP_SALSA</name>
<evidence type="ECO:0000250" key="1">
    <source>
        <dbReference type="UniProtKB" id="P02743"/>
    </source>
</evidence>
<evidence type="ECO:0000255" key="2"/>
<evidence type="ECO:0000255" key="3">
    <source>
        <dbReference type="PROSITE-ProRule" id="PRU01172"/>
    </source>
</evidence>
<evidence type="ECO:0000269" key="4">
    <source>
    </source>
</evidence>
<evidence type="ECO:0000303" key="5">
    <source>
    </source>
</evidence>
<evidence type="ECO:0000305" key="6"/>
<sequence length="36" mass="3879">AHQDLSGKVFVIPMATSTSHVKLHARVSEPISAMTM</sequence>
<proteinExistence type="evidence at protein level"/>
<accession>P86693</accession>
<protein>
    <recommendedName>
        <fullName evidence="1">Serum amyloid P-component</fullName>
    </recommendedName>
    <alternativeName>
        <fullName evidence="5">Agarose-binding protein</fullName>
        <shortName evidence="5">Ss-ABP</shortName>
    </alternativeName>
</protein>
<reference evidence="6" key="1">
    <citation type="journal article" date="1998" name="Dev. Comp. Immunol.">
        <title>A comparative study of pentraxin-like proteins in different fish species.</title>
        <authorList>
            <person name="Lund V."/>
            <person name="Olafsen J.A."/>
        </authorList>
    </citation>
    <scope>PROTEIN SEQUENCE</scope>
    <scope>COFACTOR</scope>
    <scope>SUBUNIT</scope>
    <scope>SUBCELLULAR LOCATION</scope>
    <source>
        <tissue evidence="4">Serum</tissue>
    </source>
</reference>
<dbReference type="SMR" id="P86693"/>
<dbReference type="STRING" id="8030.ENSSSAP00000026285"/>
<dbReference type="PaxDb" id="8030-ENSSSAP00000026285"/>
<dbReference type="Proteomes" id="UP000087266">
    <property type="component" value="Unplaced"/>
</dbReference>
<dbReference type="GO" id="GO:0005615">
    <property type="term" value="C:extracellular space"/>
    <property type="evidence" value="ECO:0000314"/>
    <property type="project" value="AgBase"/>
</dbReference>
<dbReference type="GO" id="GO:0030246">
    <property type="term" value="F:carbohydrate binding"/>
    <property type="evidence" value="ECO:0007669"/>
    <property type="project" value="UniProtKB-KW"/>
</dbReference>
<dbReference type="GO" id="GO:0042802">
    <property type="term" value="F:identical protein binding"/>
    <property type="evidence" value="ECO:0000314"/>
    <property type="project" value="AgBase"/>
</dbReference>
<dbReference type="GO" id="GO:0046872">
    <property type="term" value="F:metal ion binding"/>
    <property type="evidence" value="ECO:0007669"/>
    <property type="project" value="UniProtKB-KW"/>
</dbReference>
<dbReference type="GO" id="GO:0001864">
    <property type="term" value="F:pentraxin binding"/>
    <property type="evidence" value="ECO:0000314"/>
    <property type="project" value="AgBase"/>
</dbReference>
<dbReference type="GO" id="GO:0051260">
    <property type="term" value="P:protein homooligomerization"/>
    <property type="evidence" value="ECO:0000314"/>
    <property type="project" value="AgBase"/>
</dbReference>
<dbReference type="GO" id="GO:0009617">
    <property type="term" value="P:response to bacterium"/>
    <property type="evidence" value="ECO:0000314"/>
    <property type="project" value="AgBase"/>
</dbReference>
<dbReference type="GO" id="GO:0032496">
    <property type="term" value="P:response to lipopolysaccharide"/>
    <property type="evidence" value="ECO:0000314"/>
    <property type="project" value="AgBase"/>
</dbReference>
<dbReference type="InterPro" id="IPR001759">
    <property type="entry name" value="Pentraxin-related"/>
</dbReference>
<dbReference type="PROSITE" id="PS51828">
    <property type="entry name" value="PTX_2"/>
    <property type="match status" value="1"/>
</dbReference>